<keyword id="KW-0963">Cytoplasm</keyword>
<keyword id="KW-0648">Protein biosynthesis</keyword>
<evidence type="ECO:0000255" key="1">
    <source>
        <dbReference type="HAMAP-Rule" id="MF_00040"/>
    </source>
</evidence>
<reference key="1">
    <citation type="journal article" date="2001" name="Science">
        <title>Mechanisms of evolution in Rickettsia conorii and R. prowazekii.</title>
        <authorList>
            <person name="Ogata H."/>
            <person name="Audic S."/>
            <person name="Renesto-Audiffren P."/>
            <person name="Fournier P.-E."/>
            <person name="Barbe V."/>
            <person name="Samson D."/>
            <person name="Roux V."/>
            <person name="Cossart P."/>
            <person name="Weissenbach J."/>
            <person name="Claverie J.-M."/>
            <person name="Raoult D."/>
        </authorList>
    </citation>
    <scope>NUCLEOTIDE SEQUENCE [LARGE SCALE GENOMIC DNA]</scope>
    <source>
        <strain>ATCC VR-613 / Malish 7</strain>
    </source>
</reference>
<gene>
    <name evidence="1" type="primary">frr</name>
    <name type="synonym">rrf</name>
    <name type="ordered locus">RC0197</name>
</gene>
<organism>
    <name type="scientific">Rickettsia conorii (strain ATCC VR-613 / Malish 7)</name>
    <dbReference type="NCBI Taxonomy" id="272944"/>
    <lineage>
        <taxon>Bacteria</taxon>
        <taxon>Pseudomonadati</taxon>
        <taxon>Pseudomonadota</taxon>
        <taxon>Alphaproteobacteria</taxon>
        <taxon>Rickettsiales</taxon>
        <taxon>Rickettsiaceae</taxon>
        <taxon>Rickettsieae</taxon>
        <taxon>Rickettsia</taxon>
        <taxon>spotted fever group</taxon>
    </lineage>
</organism>
<comment type="function">
    <text evidence="1">Responsible for the release of ribosomes from messenger RNA at the termination of protein biosynthesis. May increase the efficiency of translation by recycling ribosomes from one round of translation to another.</text>
</comment>
<comment type="subcellular location">
    <subcellularLocation>
        <location evidence="1">Cytoplasm</location>
    </subcellularLocation>
</comment>
<comment type="similarity">
    <text evidence="1">Belongs to the RRF family.</text>
</comment>
<feature type="chain" id="PRO_0000167527" description="Ribosome-recycling factor">
    <location>
        <begin position="1"/>
        <end position="186"/>
    </location>
</feature>
<name>RRF_RICCN</name>
<protein>
    <recommendedName>
        <fullName evidence="1">Ribosome-recycling factor</fullName>
        <shortName evidence="1">RRF</shortName>
    </recommendedName>
    <alternativeName>
        <fullName evidence="1">Ribosome-releasing factor</fullName>
    </alternativeName>
</protein>
<accession>Q92J72</accession>
<dbReference type="EMBL" id="AE006914">
    <property type="protein sequence ID" value="AAL02735.1"/>
    <property type="molecule type" value="Genomic_DNA"/>
</dbReference>
<dbReference type="PIR" id="E97724">
    <property type="entry name" value="E97724"/>
</dbReference>
<dbReference type="RefSeq" id="WP_010976866.1">
    <property type="nucleotide sequence ID" value="NC_003103.1"/>
</dbReference>
<dbReference type="SMR" id="Q92J72"/>
<dbReference type="GeneID" id="927994"/>
<dbReference type="KEGG" id="rco:RC0197"/>
<dbReference type="PATRIC" id="fig|272944.4.peg.227"/>
<dbReference type="HOGENOM" id="CLU_073981_2_1_5"/>
<dbReference type="Proteomes" id="UP000000816">
    <property type="component" value="Chromosome"/>
</dbReference>
<dbReference type="GO" id="GO:0005829">
    <property type="term" value="C:cytosol"/>
    <property type="evidence" value="ECO:0007669"/>
    <property type="project" value="GOC"/>
</dbReference>
<dbReference type="GO" id="GO:0043023">
    <property type="term" value="F:ribosomal large subunit binding"/>
    <property type="evidence" value="ECO:0007669"/>
    <property type="project" value="TreeGrafter"/>
</dbReference>
<dbReference type="GO" id="GO:0002184">
    <property type="term" value="P:cytoplasmic translational termination"/>
    <property type="evidence" value="ECO:0007669"/>
    <property type="project" value="TreeGrafter"/>
</dbReference>
<dbReference type="CDD" id="cd00520">
    <property type="entry name" value="RRF"/>
    <property type="match status" value="1"/>
</dbReference>
<dbReference type="FunFam" id="1.10.132.20:FF:000001">
    <property type="entry name" value="Ribosome-recycling factor"/>
    <property type="match status" value="1"/>
</dbReference>
<dbReference type="FunFam" id="3.30.1360.40:FF:000001">
    <property type="entry name" value="Ribosome-recycling factor"/>
    <property type="match status" value="1"/>
</dbReference>
<dbReference type="Gene3D" id="3.30.1360.40">
    <property type="match status" value="1"/>
</dbReference>
<dbReference type="Gene3D" id="1.10.132.20">
    <property type="entry name" value="Ribosome-recycling factor"/>
    <property type="match status" value="1"/>
</dbReference>
<dbReference type="HAMAP" id="MF_00040">
    <property type="entry name" value="RRF"/>
    <property type="match status" value="1"/>
</dbReference>
<dbReference type="InterPro" id="IPR002661">
    <property type="entry name" value="Ribosome_recyc_fac"/>
</dbReference>
<dbReference type="InterPro" id="IPR023584">
    <property type="entry name" value="Ribosome_recyc_fac_dom"/>
</dbReference>
<dbReference type="InterPro" id="IPR036191">
    <property type="entry name" value="RRF_sf"/>
</dbReference>
<dbReference type="NCBIfam" id="TIGR00496">
    <property type="entry name" value="frr"/>
    <property type="match status" value="1"/>
</dbReference>
<dbReference type="PANTHER" id="PTHR20982:SF3">
    <property type="entry name" value="MITOCHONDRIAL RIBOSOME RECYCLING FACTOR PSEUDO 1"/>
    <property type="match status" value="1"/>
</dbReference>
<dbReference type="PANTHER" id="PTHR20982">
    <property type="entry name" value="RIBOSOME RECYCLING FACTOR"/>
    <property type="match status" value="1"/>
</dbReference>
<dbReference type="Pfam" id="PF01765">
    <property type="entry name" value="RRF"/>
    <property type="match status" value="1"/>
</dbReference>
<dbReference type="SUPFAM" id="SSF55194">
    <property type="entry name" value="Ribosome recycling factor, RRF"/>
    <property type="match status" value="1"/>
</dbReference>
<proteinExistence type="inferred from homology"/>
<sequence length="186" mass="20812">MDKEHLKKNLQEKMEKALKVLDHELKGLRTGRASVNLLDSVTVEAYGSKMPLSQVASLSTPDARTINVQVWDKSMVSSVEKGITIANLGLTPATDGQLIRLPIPALTEERRTALVKLAHKYGEDTKISLRNIRRDGNEALKKLEKDNVIAKDEHHSLSEQVQKLTDDYSSKVDSVIKQKEQEIMTV</sequence>